<dbReference type="EC" id="2.7.7.3" evidence="1"/>
<dbReference type="EMBL" id="CP000261">
    <property type="protein sequence ID" value="ABF36338.1"/>
    <property type="molecule type" value="Genomic_DNA"/>
</dbReference>
<dbReference type="SMR" id="Q1JAS0"/>
<dbReference type="KEGG" id="spj:MGAS2096_Spy1286"/>
<dbReference type="HOGENOM" id="CLU_100149_0_1_9"/>
<dbReference type="UniPathway" id="UPA00241">
    <property type="reaction ID" value="UER00355"/>
</dbReference>
<dbReference type="GO" id="GO:0005737">
    <property type="term" value="C:cytoplasm"/>
    <property type="evidence" value="ECO:0007669"/>
    <property type="project" value="UniProtKB-SubCell"/>
</dbReference>
<dbReference type="GO" id="GO:0005524">
    <property type="term" value="F:ATP binding"/>
    <property type="evidence" value="ECO:0007669"/>
    <property type="project" value="UniProtKB-KW"/>
</dbReference>
<dbReference type="GO" id="GO:0004595">
    <property type="term" value="F:pantetheine-phosphate adenylyltransferase activity"/>
    <property type="evidence" value="ECO:0007669"/>
    <property type="project" value="UniProtKB-UniRule"/>
</dbReference>
<dbReference type="GO" id="GO:0015937">
    <property type="term" value="P:coenzyme A biosynthetic process"/>
    <property type="evidence" value="ECO:0007669"/>
    <property type="project" value="UniProtKB-UniRule"/>
</dbReference>
<dbReference type="CDD" id="cd02163">
    <property type="entry name" value="PPAT"/>
    <property type="match status" value="1"/>
</dbReference>
<dbReference type="Gene3D" id="3.40.50.620">
    <property type="entry name" value="HUPs"/>
    <property type="match status" value="1"/>
</dbReference>
<dbReference type="HAMAP" id="MF_00151">
    <property type="entry name" value="PPAT_bact"/>
    <property type="match status" value="1"/>
</dbReference>
<dbReference type="InterPro" id="IPR004821">
    <property type="entry name" value="Cyt_trans-like"/>
</dbReference>
<dbReference type="InterPro" id="IPR001980">
    <property type="entry name" value="PPAT"/>
</dbReference>
<dbReference type="InterPro" id="IPR014729">
    <property type="entry name" value="Rossmann-like_a/b/a_fold"/>
</dbReference>
<dbReference type="NCBIfam" id="TIGR01510">
    <property type="entry name" value="coaD_prev_kdtB"/>
    <property type="match status" value="1"/>
</dbReference>
<dbReference type="NCBIfam" id="TIGR00125">
    <property type="entry name" value="cyt_tran_rel"/>
    <property type="match status" value="1"/>
</dbReference>
<dbReference type="PANTHER" id="PTHR21342">
    <property type="entry name" value="PHOSPHOPANTETHEINE ADENYLYLTRANSFERASE"/>
    <property type="match status" value="1"/>
</dbReference>
<dbReference type="PANTHER" id="PTHR21342:SF1">
    <property type="entry name" value="PHOSPHOPANTETHEINE ADENYLYLTRANSFERASE"/>
    <property type="match status" value="1"/>
</dbReference>
<dbReference type="Pfam" id="PF01467">
    <property type="entry name" value="CTP_transf_like"/>
    <property type="match status" value="1"/>
</dbReference>
<dbReference type="PRINTS" id="PR01020">
    <property type="entry name" value="LPSBIOSNTHSS"/>
</dbReference>
<dbReference type="SUPFAM" id="SSF52374">
    <property type="entry name" value="Nucleotidylyl transferase"/>
    <property type="match status" value="1"/>
</dbReference>
<name>COAD_STRPB</name>
<gene>
    <name evidence="1" type="primary">coaD</name>
    <name type="ordered locus">MGAS2096_Spy1286</name>
</gene>
<evidence type="ECO:0000255" key="1">
    <source>
        <dbReference type="HAMAP-Rule" id="MF_00151"/>
    </source>
</evidence>
<reference key="1">
    <citation type="journal article" date="2006" name="Proc. Natl. Acad. Sci. U.S.A.">
        <title>Molecular genetic anatomy of inter- and intraserotype variation in the human bacterial pathogen group A Streptococcus.</title>
        <authorList>
            <person name="Beres S.B."/>
            <person name="Richter E.W."/>
            <person name="Nagiec M.J."/>
            <person name="Sumby P."/>
            <person name="Porcella S.F."/>
            <person name="DeLeo F.R."/>
            <person name="Musser J.M."/>
        </authorList>
    </citation>
    <scope>NUCLEOTIDE SEQUENCE [LARGE SCALE GENOMIC DNA]</scope>
    <source>
        <strain>MGAS2096</strain>
    </source>
</reference>
<protein>
    <recommendedName>
        <fullName evidence="1">Phosphopantetheine adenylyltransferase</fullName>
        <ecNumber evidence="1">2.7.7.3</ecNumber>
    </recommendedName>
    <alternativeName>
        <fullName evidence="1">Dephospho-CoA pyrophosphorylase</fullName>
    </alternativeName>
    <alternativeName>
        <fullName evidence="1">Pantetheine-phosphate adenylyltransferase</fullName>
        <shortName evidence="1">PPAT</shortName>
    </alternativeName>
</protein>
<proteinExistence type="inferred from homology"/>
<sequence length="163" mass="18629">MLTKIGLYTGSFDPVTNGHLDIVKRASGLFDQIYVGIFDNPTKKSYFKLEVRKAMLTQALADFTNVIVVTSHERLAIDVAKELRVTHLIRGLRNATDFEYEENLEYFNHLLAPNIETVYLISRNKWQALSSSRVRELIHFQSSLEGLVPQSVIAQVEKMNEKT</sequence>
<keyword id="KW-0067">ATP-binding</keyword>
<keyword id="KW-0173">Coenzyme A biosynthesis</keyword>
<keyword id="KW-0963">Cytoplasm</keyword>
<keyword id="KW-0460">Magnesium</keyword>
<keyword id="KW-0547">Nucleotide-binding</keyword>
<keyword id="KW-0548">Nucleotidyltransferase</keyword>
<keyword id="KW-0808">Transferase</keyword>
<feature type="chain" id="PRO_1000011251" description="Phosphopantetheine adenylyltransferase">
    <location>
        <begin position="1"/>
        <end position="163"/>
    </location>
</feature>
<feature type="binding site" evidence="1">
    <location>
        <begin position="11"/>
        <end position="12"/>
    </location>
    <ligand>
        <name>ATP</name>
        <dbReference type="ChEBI" id="CHEBI:30616"/>
    </ligand>
</feature>
<feature type="binding site" evidence="1">
    <location>
        <position position="11"/>
    </location>
    <ligand>
        <name>substrate</name>
    </ligand>
</feature>
<feature type="binding site" evidence="1">
    <location>
        <position position="19"/>
    </location>
    <ligand>
        <name>ATP</name>
        <dbReference type="ChEBI" id="CHEBI:30616"/>
    </ligand>
</feature>
<feature type="binding site" evidence="1">
    <location>
        <position position="43"/>
    </location>
    <ligand>
        <name>substrate</name>
    </ligand>
</feature>
<feature type="binding site" evidence="1">
    <location>
        <position position="76"/>
    </location>
    <ligand>
        <name>substrate</name>
    </ligand>
</feature>
<feature type="binding site" evidence="1">
    <location>
        <position position="90"/>
    </location>
    <ligand>
        <name>substrate</name>
    </ligand>
</feature>
<feature type="binding site" evidence="1">
    <location>
        <begin position="91"/>
        <end position="93"/>
    </location>
    <ligand>
        <name>ATP</name>
        <dbReference type="ChEBI" id="CHEBI:30616"/>
    </ligand>
</feature>
<feature type="binding site" evidence="1">
    <location>
        <position position="101"/>
    </location>
    <ligand>
        <name>ATP</name>
        <dbReference type="ChEBI" id="CHEBI:30616"/>
    </ligand>
</feature>
<feature type="binding site" evidence="1">
    <location>
        <begin position="126"/>
        <end position="132"/>
    </location>
    <ligand>
        <name>ATP</name>
        <dbReference type="ChEBI" id="CHEBI:30616"/>
    </ligand>
</feature>
<feature type="site" description="Transition state stabilizer" evidence="1">
    <location>
        <position position="19"/>
    </location>
</feature>
<comment type="function">
    <text evidence="1">Reversibly transfers an adenylyl group from ATP to 4'-phosphopantetheine, yielding dephospho-CoA (dPCoA) and pyrophosphate.</text>
</comment>
<comment type="catalytic activity">
    <reaction evidence="1">
        <text>(R)-4'-phosphopantetheine + ATP + H(+) = 3'-dephospho-CoA + diphosphate</text>
        <dbReference type="Rhea" id="RHEA:19801"/>
        <dbReference type="ChEBI" id="CHEBI:15378"/>
        <dbReference type="ChEBI" id="CHEBI:30616"/>
        <dbReference type="ChEBI" id="CHEBI:33019"/>
        <dbReference type="ChEBI" id="CHEBI:57328"/>
        <dbReference type="ChEBI" id="CHEBI:61723"/>
        <dbReference type="EC" id="2.7.7.3"/>
    </reaction>
</comment>
<comment type="cofactor">
    <cofactor evidence="1">
        <name>Mg(2+)</name>
        <dbReference type="ChEBI" id="CHEBI:18420"/>
    </cofactor>
</comment>
<comment type="pathway">
    <text evidence="1">Cofactor biosynthesis; coenzyme A biosynthesis; CoA from (R)-pantothenate: step 4/5.</text>
</comment>
<comment type="subunit">
    <text evidence="1">Homohexamer.</text>
</comment>
<comment type="subcellular location">
    <subcellularLocation>
        <location evidence="1">Cytoplasm</location>
    </subcellularLocation>
</comment>
<comment type="similarity">
    <text evidence="1">Belongs to the bacterial CoaD family.</text>
</comment>
<organism>
    <name type="scientific">Streptococcus pyogenes serotype M12 (strain MGAS2096)</name>
    <dbReference type="NCBI Taxonomy" id="370553"/>
    <lineage>
        <taxon>Bacteria</taxon>
        <taxon>Bacillati</taxon>
        <taxon>Bacillota</taxon>
        <taxon>Bacilli</taxon>
        <taxon>Lactobacillales</taxon>
        <taxon>Streptococcaceae</taxon>
        <taxon>Streptococcus</taxon>
    </lineage>
</organism>
<accession>Q1JAS0</accession>